<dbReference type="EC" id="3.6.1.41" evidence="1"/>
<dbReference type="EMBL" id="CP000503">
    <property type="protein sequence ID" value="ABM25995.1"/>
    <property type="molecule type" value="Genomic_DNA"/>
</dbReference>
<dbReference type="RefSeq" id="WP_011790445.1">
    <property type="nucleotide sequence ID" value="NC_008750.1"/>
</dbReference>
<dbReference type="SMR" id="A1RMV0"/>
<dbReference type="KEGG" id="shw:Sputw3181_3180"/>
<dbReference type="HOGENOM" id="CLU_056184_2_0_6"/>
<dbReference type="Proteomes" id="UP000002597">
    <property type="component" value="Chromosome"/>
</dbReference>
<dbReference type="GO" id="GO:0005737">
    <property type="term" value="C:cytoplasm"/>
    <property type="evidence" value="ECO:0007669"/>
    <property type="project" value="TreeGrafter"/>
</dbReference>
<dbReference type="GO" id="GO:0008803">
    <property type="term" value="F:bis(5'-nucleosyl)-tetraphosphatase (symmetrical) activity"/>
    <property type="evidence" value="ECO:0007669"/>
    <property type="project" value="UniProtKB-UniRule"/>
</dbReference>
<dbReference type="GO" id="GO:0016791">
    <property type="term" value="F:phosphatase activity"/>
    <property type="evidence" value="ECO:0007669"/>
    <property type="project" value="TreeGrafter"/>
</dbReference>
<dbReference type="GO" id="GO:0110154">
    <property type="term" value="P:RNA decapping"/>
    <property type="evidence" value="ECO:0007669"/>
    <property type="project" value="TreeGrafter"/>
</dbReference>
<dbReference type="CDD" id="cd07422">
    <property type="entry name" value="MPP_ApaH"/>
    <property type="match status" value="1"/>
</dbReference>
<dbReference type="Gene3D" id="3.60.21.10">
    <property type="match status" value="1"/>
</dbReference>
<dbReference type="HAMAP" id="MF_00199">
    <property type="entry name" value="ApaH"/>
    <property type="match status" value="1"/>
</dbReference>
<dbReference type="InterPro" id="IPR050126">
    <property type="entry name" value="Ap4A_hydrolase"/>
</dbReference>
<dbReference type="InterPro" id="IPR004617">
    <property type="entry name" value="ApaH"/>
</dbReference>
<dbReference type="InterPro" id="IPR004843">
    <property type="entry name" value="Calcineurin-like_PHP_ApaH"/>
</dbReference>
<dbReference type="InterPro" id="IPR029052">
    <property type="entry name" value="Metallo-depent_PP-like"/>
</dbReference>
<dbReference type="NCBIfam" id="TIGR00668">
    <property type="entry name" value="apaH"/>
    <property type="match status" value="1"/>
</dbReference>
<dbReference type="NCBIfam" id="NF001204">
    <property type="entry name" value="PRK00166.1"/>
    <property type="match status" value="1"/>
</dbReference>
<dbReference type="PANTHER" id="PTHR42850:SF11">
    <property type="entry name" value="BIS(5'-NUCLEOSYL)-TETRAPHOSPHATASE [SYMMETRICAL]"/>
    <property type="match status" value="1"/>
</dbReference>
<dbReference type="PANTHER" id="PTHR42850">
    <property type="entry name" value="METALLOPHOSPHOESTERASE"/>
    <property type="match status" value="1"/>
</dbReference>
<dbReference type="Pfam" id="PF00149">
    <property type="entry name" value="Metallophos"/>
    <property type="match status" value="1"/>
</dbReference>
<dbReference type="PIRSF" id="PIRSF000903">
    <property type="entry name" value="B5n-ttraPtase_sm"/>
    <property type="match status" value="1"/>
</dbReference>
<dbReference type="SUPFAM" id="SSF56300">
    <property type="entry name" value="Metallo-dependent phosphatases"/>
    <property type="match status" value="1"/>
</dbReference>
<reference key="1">
    <citation type="submission" date="2006-12" db="EMBL/GenBank/DDBJ databases">
        <title>Complete sequence of Shewanella sp. W3-18-1.</title>
        <authorList>
            <consortium name="US DOE Joint Genome Institute"/>
            <person name="Copeland A."/>
            <person name="Lucas S."/>
            <person name="Lapidus A."/>
            <person name="Barry K."/>
            <person name="Detter J.C."/>
            <person name="Glavina del Rio T."/>
            <person name="Hammon N."/>
            <person name="Israni S."/>
            <person name="Dalin E."/>
            <person name="Tice H."/>
            <person name="Pitluck S."/>
            <person name="Chain P."/>
            <person name="Malfatti S."/>
            <person name="Shin M."/>
            <person name="Vergez L."/>
            <person name="Schmutz J."/>
            <person name="Larimer F."/>
            <person name="Land M."/>
            <person name="Hauser L."/>
            <person name="Kyrpides N."/>
            <person name="Lykidis A."/>
            <person name="Tiedje J."/>
            <person name="Richardson P."/>
        </authorList>
    </citation>
    <scope>NUCLEOTIDE SEQUENCE [LARGE SCALE GENOMIC DNA]</scope>
    <source>
        <strain>W3-18-1</strain>
    </source>
</reference>
<sequence length="274" mass="31520">MAHYFVGDVQGCFTELQKVLEKVDFNPSQDELWAVGDLVARGPDSLATLRFFKSLGDSAKTVLGNHDLHLMAIHGKLKRDKPSDNLKALLKADDINELIDWLRQQPLMRELPEQQLIMTHAGVPPQWSLETLRQESALVSHALKQDDYLEALISQMYTDTAERWEPTALGIARLRFCINALTRMRYLYVDGHLNFDCKQPPQDCTDPQLRPWYEYTSPLRQSHTLVFGHWAALMGNVNDKKLKALDTGCCWGEHLTLWHLEKDQKITQKRLKKS</sequence>
<comment type="function">
    <text evidence="1">Hydrolyzes diadenosine 5',5'''-P1,P4-tetraphosphate to yield ADP.</text>
</comment>
<comment type="catalytic activity">
    <reaction evidence="1">
        <text>P(1),P(4)-bis(5'-adenosyl) tetraphosphate + H2O = 2 ADP + 2 H(+)</text>
        <dbReference type="Rhea" id="RHEA:24252"/>
        <dbReference type="ChEBI" id="CHEBI:15377"/>
        <dbReference type="ChEBI" id="CHEBI:15378"/>
        <dbReference type="ChEBI" id="CHEBI:58141"/>
        <dbReference type="ChEBI" id="CHEBI:456216"/>
        <dbReference type="EC" id="3.6.1.41"/>
    </reaction>
</comment>
<comment type="similarity">
    <text evidence="1">Belongs to the Ap4A hydrolase family.</text>
</comment>
<evidence type="ECO:0000255" key="1">
    <source>
        <dbReference type="HAMAP-Rule" id="MF_00199"/>
    </source>
</evidence>
<name>APAH_SHESW</name>
<keyword id="KW-0378">Hydrolase</keyword>
<protein>
    <recommendedName>
        <fullName evidence="1">Bis(5'-nucleosyl)-tetraphosphatase, symmetrical</fullName>
        <ecNumber evidence="1">3.6.1.41</ecNumber>
    </recommendedName>
    <alternativeName>
        <fullName evidence="1">Ap4A hydrolase</fullName>
    </alternativeName>
    <alternativeName>
        <fullName evidence="1">Diadenosine 5',5'''-P1,P4-tetraphosphate pyrophosphohydrolase</fullName>
    </alternativeName>
    <alternativeName>
        <fullName evidence="1">Diadenosine tetraphosphatase</fullName>
    </alternativeName>
</protein>
<organism>
    <name type="scientific">Shewanella sp. (strain W3-18-1)</name>
    <dbReference type="NCBI Taxonomy" id="351745"/>
    <lineage>
        <taxon>Bacteria</taxon>
        <taxon>Pseudomonadati</taxon>
        <taxon>Pseudomonadota</taxon>
        <taxon>Gammaproteobacteria</taxon>
        <taxon>Alteromonadales</taxon>
        <taxon>Shewanellaceae</taxon>
        <taxon>Shewanella</taxon>
    </lineage>
</organism>
<proteinExistence type="inferred from homology"/>
<gene>
    <name evidence="1" type="primary">apaH</name>
    <name type="ordered locus">Sputw3181_3180</name>
</gene>
<accession>A1RMV0</accession>
<feature type="chain" id="PRO_1000012096" description="Bis(5'-nucleosyl)-tetraphosphatase, symmetrical">
    <location>
        <begin position="1"/>
        <end position="274"/>
    </location>
</feature>